<feature type="chain" id="PRO_1000125227" description="Glutamate 5-kinase">
    <location>
        <begin position="1"/>
        <end position="371"/>
    </location>
</feature>
<feature type="domain" description="PUA" evidence="1">
    <location>
        <begin position="274"/>
        <end position="352"/>
    </location>
</feature>
<feature type="binding site" evidence="1">
    <location>
        <position position="10"/>
    </location>
    <ligand>
        <name>ATP</name>
        <dbReference type="ChEBI" id="CHEBI:30616"/>
    </ligand>
</feature>
<feature type="binding site" evidence="1">
    <location>
        <position position="50"/>
    </location>
    <ligand>
        <name>substrate</name>
    </ligand>
</feature>
<feature type="binding site" evidence="1">
    <location>
        <position position="137"/>
    </location>
    <ligand>
        <name>substrate</name>
    </ligand>
</feature>
<feature type="binding site" evidence="1">
    <location>
        <position position="149"/>
    </location>
    <ligand>
        <name>substrate</name>
    </ligand>
</feature>
<feature type="binding site" evidence="1">
    <location>
        <begin position="169"/>
        <end position="170"/>
    </location>
    <ligand>
        <name>ATP</name>
        <dbReference type="ChEBI" id="CHEBI:30616"/>
    </ligand>
</feature>
<feature type="binding site" evidence="1">
    <location>
        <begin position="208"/>
        <end position="214"/>
    </location>
    <ligand>
        <name>ATP</name>
        <dbReference type="ChEBI" id="CHEBI:30616"/>
    </ligand>
</feature>
<dbReference type="EC" id="2.7.2.11" evidence="1"/>
<dbReference type="EMBL" id="CP001251">
    <property type="protein sequence ID" value="ACK42115.1"/>
    <property type="molecule type" value="Genomic_DNA"/>
</dbReference>
<dbReference type="RefSeq" id="WP_012583199.1">
    <property type="nucleotide sequence ID" value="NC_011661.1"/>
</dbReference>
<dbReference type="RefSeq" id="YP_002352729.1">
    <property type="nucleotide sequence ID" value="NC_011661.1"/>
</dbReference>
<dbReference type="SMR" id="B8E032"/>
<dbReference type="FunCoup" id="B8E032">
    <property type="interactions" value="270"/>
</dbReference>
<dbReference type="STRING" id="515635.Dtur_0834"/>
<dbReference type="EnsemblBacteria" id="ACK42115">
    <property type="protein sequence ID" value="ACK42115"/>
    <property type="gene ID" value="Dtur_0834"/>
</dbReference>
<dbReference type="KEGG" id="dtu:Dtur_0834"/>
<dbReference type="PATRIC" id="fig|515635.4.peg.873"/>
<dbReference type="eggNOG" id="COG0263">
    <property type="taxonomic scope" value="Bacteria"/>
</dbReference>
<dbReference type="HOGENOM" id="CLU_025400_2_0_0"/>
<dbReference type="InParanoid" id="B8E032"/>
<dbReference type="OrthoDB" id="9804434at2"/>
<dbReference type="UniPathway" id="UPA00098">
    <property type="reaction ID" value="UER00359"/>
</dbReference>
<dbReference type="Proteomes" id="UP000007719">
    <property type="component" value="Chromosome"/>
</dbReference>
<dbReference type="GO" id="GO:0005829">
    <property type="term" value="C:cytosol"/>
    <property type="evidence" value="ECO:0000318"/>
    <property type="project" value="GO_Central"/>
</dbReference>
<dbReference type="GO" id="GO:0005524">
    <property type="term" value="F:ATP binding"/>
    <property type="evidence" value="ECO:0007669"/>
    <property type="project" value="UniProtKB-KW"/>
</dbReference>
<dbReference type="GO" id="GO:0004349">
    <property type="term" value="F:glutamate 5-kinase activity"/>
    <property type="evidence" value="ECO:0000318"/>
    <property type="project" value="GO_Central"/>
</dbReference>
<dbReference type="GO" id="GO:0003723">
    <property type="term" value="F:RNA binding"/>
    <property type="evidence" value="ECO:0007669"/>
    <property type="project" value="InterPro"/>
</dbReference>
<dbReference type="GO" id="GO:0055129">
    <property type="term" value="P:L-proline biosynthetic process"/>
    <property type="evidence" value="ECO:0007669"/>
    <property type="project" value="UniProtKB-UniRule"/>
</dbReference>
<dbReference type="GO" id="GO:0006561">
    <property type="term" value="P:proline biosynthetic process"/>
    <property type="evidence" value="ECO:0000318"/>
    <property type="project" value="GO_Central"/>
</dbReference>
<dbReference type="CDD" id="cd04242">
    <property type="entry name" value="AAK_G5K_ProB"/>
    <property type="match status" value="1"/>
</dbReference>
<dbReference type="CDD" id="cd21157">
    <property type="entry name" value="PUA_G5K"/>
    <property type="match status" value="1"/>
</dbReference>
<dbReference type="FunFam" id="2.30.130.10:FF:000007">
    <property type="entry name" value="Glutamate 5-kinase"/>
    <property type="match status" value="1"/>
</dbReference>
<dbReference type="FunFam" id="3.40.1160.10:FF:000018">
    <property type="entry name" value="Glutamate 5-kinase"/>
    <property type="match status" value="1"/>
</dbReference>
<dbReference type="Gene3D" id="3.40.1160.10">
    <property type="entry name" value="Acetylglutamate kinase-like"/>
    <property type="match status" value="1"/>
</dbReference>
<dbReference type="Gene3D" id="2.30.130.10">
    <property type="entry name" value="PUA domain"/>
    <property type="match status" value="1"/>
</dbReference>
<dbReference type="HAMAP" id="MF_00456">
    <property type="entry name" value="ProB"/>
    <property type="match status" value="1"/>
</dbReference>
<dbReference type="InterPro" id="IPR036393">
    <property type="entry name" value="AceGlu_kinase-like_sf"/>
</dbReference>
<dbReference type="InterPro" id="IPR001048">
    <property type="entry name" value="Asp/Glu/Uridylate_kinase"/>
</dbReference>
<dbReference type="InterPro" id="IPR041739">
    <property type="entry name" value="G5K_ProB"/>
</dbReference>
<dbReference type="InterPro" id="IPR001057">
    <property type="entry name" value="Glu/AcGlu_kinase"/>
</dbReference>
<dbReference type="InterPro" id="IPR011529">
    <property type="entry name" value="Glu_5kinase"/>
</dbReference>
<dbReference type="InterPro" id="IPR005715">
    <property type="entry name" value="Glu_5kinase/COase_Synthase"/>
</dbReference>
<dbReference type="InterPro" id="IPR002478">
    <property type="entry name" value="PUA"/>
</dbReference>
<dbReference type="InterPro" id="IPR015947">
    <property type="entry name" value="PUA-like_sf"/>
</dbReference>
<dbReference type="InterPro" id="IPR036974">
    <property type="entry name" value="PUA_sf"/>
</dbReference>
<dbReference type="NCBIfam" id="TIGR01027">
    <property type="entry name" value="proB"/>
    <property type="match status" value="1"/>
</dbReference>
<dbReference type="PANTHER" id="PTHR43654">
    <property type="entry name" value="GLUTAMATE 5-KINASE"/>
    <property type="match status" value="1"/>
</dbReference>
<dbReference type="PANTHER" id="PTHR43654:SF1">
    <property type="entry name" value="ISOPENTENYL PHOSPHATE KINASE"/>
    <property type="match status" value="1"/>
</dbReference>
<dbReference type="Pfam" id="PF00696">
    <property type="entry name" value="AA_kinase"/>
    <property type="match status" value="1"/>
</dbReference>
<dbReference type="Pfam" id="PF01472">
    <property type="entry name" value="PUA"/>
    <property type="match status" value="1"/>
</dbReference>
<dbReference type="PIRSF" id="PIRSF000729">
    <property type="entry name" value="GK"/>
    <property type="match status" value="1"/>
</dbReference>
<dbReference type="PRINTS" id="PR00474">
    <property type="entry name" value="GLU5KINASE"/>
</dbReference>
<dbReference type="SMART" id="SM00359">
    <property type="entry name" value="PUA"/>
    <property type="match status" value="1"/>
</dbReference>
<dbReference type="SUPFAM" id="SSF53633">
    <property type="entry name" value="Carbamate kinase-like"/>
    <property type="match status" value="1"/>
</dbReference>
<dbReference type="SUPFAM" id="SSF88697">
    <property type="entry name" value="PUA domain-like"/>
    <property type="match status" value="1"/>
</dbReference>
<dbReference type="PROSITE" id="PS50890">
    <property type="entry name" value="PUA"/>
    <property type="match status" value="1"/>
</dbReference>
<comment type="function">
    <text evidence="1">Catalyzes the transfer of a phosphate group to glutamate to form L-glutamate 5-phosphate.</text>
</comment>
<comment type="catalytic activity">
    <reaction evidence="1">
        <text>L-glutamate + ATP = L-glutamyl 5-phosphate + ADP</text>
        <dbReference type="Rhea" id="RHEA:14877"/>
        <dbReference type="ChEBI" id="CHEBI:29985"/>
        <dbReference type="ChEBI" id="CHEBI:30616"/>
        <dbReference type="ChEBI" id="CHEBI:58274"/>
        <dbReference type="ChEBI" id="CHEBI:456216"/>
        <dbReference type="EC" id="2.7.2.11"/>
    </reaction>
</comment>
<comment type="pathway">
    <text evidence="1">Amino-acid biosynthesis; L-proline biosynthesis; L-glutamate 5-semialdehyde from L-glutamate: step 1/2.</text>
</comment>
<comment type="subcellular location">
    <subcellularLocation>
        <location evidence="1">Cytoplasm</location>
    </subcellularLocation>
</comment>
<comment type="similarity">
    <text evidence="1">Belongs to the glutamate 5-kinase family.</text>
</comment>
<reference key="1">
    <citation type="journal article" date="2016" name="Front. Microbiol.">
        <title>The complete genome sequence of hyperthermophile Dictyoglomus turgidum DSM 6724 reveals a specialized carbohydrate fermentor.</title>
        <authorList>
            <person name="Brumm P.J."/>
            <person name="Gowda K."/>
            <person name="Robb F.T."/>
            <person name="Mead D.A."/>
        </authorList>
    </citation>
    <scope>NUCLEOTIDE SEQUENCE [LARGE SCALE GENOMIC DNA]</scope>
    <source>
        <strain>DSM 6724 / Z-1310</strain>
    </source>
</reference>
<name>PROB_DICTD</name>
<gene>
    <name evidence="1" type="primary">proB</name>
    <name type="ordered locus">Dtur_0834</name>
</gene>
<sequence>MNNWKRIVVKVGTSSITDGRGSPSGEKILSLVKECVKLIRADKELVLVSSGAIASGREIIQKLSKRKDLPAKQALSAVGQVRLMQYYSQLFSIFKQPIAQILLTAEDLRDRKRYINISQTFETLLEEKIIPIVNENDTVAVEEIKIGDNDTLSAKVACAINADLLVILSDVEGLYSEDPNISSNALLITDVYEIDESIEKIAGPGKGTGGMFTKVQAAKIVTEAGIPMILARADVENILERIVLKKEKVGTFFYPSEKHLNKRKHWMLFMAKPEGRIYIDDGAKDALLKRGKSLLPVGIKKVEGEFTRGDTVSIFDLRGEEIARGITNYDSLELDKIKGKNTEEIRNILGEDFYEEVIHRNNLVLTNRGDL</sequence>
<organism>
    <name type="scientific">Dictyoglomus turgidum (strain DSM 6724 / Z-1310)</name>
    <dbReference type="NCBI Taxonomy" id="515635"/>
    <lineage>
        <taxon>Bacteria</taxon>
        <taxon>Pseudomonadati</taxon>
        <taxon>Dictyoglomota</taxon>
        <taxon>Dictyoglomia</taxon>
        <taxon>Dictyoglomales</taxon>
        <taxon>Dictyoglomaceae</taxon>
        <taxon>Dictyoglomus</taxon>
    </lineage>
</organism>
<evidence type="ECO:0000255" key="1">
    <source>
        <dbReference type="HAMAP-Rule" id="MF_00456"/>
    </source>
</evidence>
<keyword id="KW-0028">Amino-acid biosynthesis</keyword>
<keyword id="KW-0067">ATP-binding</keyword>
<keyword id="KW-0963">Cytoplasm</keyword>
<keyword id="KW-0418">Kinase</keyword>
<keyword id="KW-0547">Nucleotide-binding</keyword>
<keyword id="KW-0641">Proline biosynthesis</keyword>
<keyword id="KW-1185">Reference proteome</keyword>
<keyword id="KW-0808">Transferase</keyword>
<protein>
    <recommendedName>
        <fullName evidence="1">Glutamate 5-kinase</fullName>
        <ecNumber evidence="1">2.7.2.11</ecNumber>
    </recommendedName>
    <alternativeName>
        <fullName evidence="1">Gamma-glutamyl kinase</fullName>
        <shortName evidence="1">GK</shortName>
    </alternativeName>
</protein>
<proteinExistence type="inferred from homology"/>
<accession>B8E032</accession>